<reference key="1">
    <citation type="journal article" date="2013" name="PLoS ONE">
        <title>Genomic and structural characterization of Kunitz-type peptide LmKTT-1a highlights diversity and evolution of scorpion potassium channel toxins.</title>
        <authorList>
            <person name="Chen Z."/>
            <person name="Luo F."/>
            <person name="Feng J."/>
            <person name="Yang W."/>
            <person name="Zeng D."/>
            <person name="Zhao R."/>
            <person name="Cao Z."/>
            <person name="Liu M."/>
            <person name="Li W."/>
            <person name="Jiang L."/>
            <person name="Wu Y."/>
        </authorList>
    </citation>
    <scope>NUCLEOTIDE SEQUENCE [GENOMIC DNA]</scope>
    <scope>NOMENCLATURE</scope>
</reference>
<reference key="2">
    <citation type="journal article" date="2012" name="J. Biol. Chem.">
        <title>Hg1, novel peptide inhibitor specific for Kv1.3 channels from first scorpion Kunitz-type potassium channel toxin family.</title>
        <authorList>
            <person name="Chen Z.-Y."/>
            <person name="Hu Y.T."/>
            <person name="Yang W.S."/>
            <person name="He Y.W."/>
            <person name="Feng J."/>
            <person name="Wang B."/>
            <person name="Zhao R.M."/>
            <person name="Ding J.P."/>
            <person name="Cao Z.-J."/>
            <person name="Li W.-X."/>
            <person name="Wu Y.-L."/>
        </authorList>
    </citation>
    <scope>NUCLEOTIDE SEQUENCE [MRNA] OF 24-81</scope>
    <scope>FUNCTION</scope>
    <scope>RECOMBINANT EXPRESSION</scope>
    <source>
        <tissue>Venom gland</tissue>
    </source>
</reference>
<reference key="3">
    <citation type="journal article" date="2015" name="Toxicon">
        <title>A new Kunitz-type plasmin inhibitor from scorpion venom.</title>
        <authorList>
            <person name="Ding L."/>
            <person name="Wang X."/>
            <person name="Liu H."/>
            <person name="San M."/>
            <person name="Xu Y."/>
            <person name="Li J."/>
            <person name="Li S."/>
            <person name="Cao Z."/>
            <person name="Li W."/>
            <person name="Wu Y."/>
            <person name="Chen Z."/>
        </authorList>
    </citation>
    <scope>FUNCTION</scope>
    <scope>MUTAGENESIS OF LYS-36 AND ALA-37</scope>
    <scope>3D-STRUCTURE MODELING</scope>
    <scope>REACTIVE BOND</scope>
    <scope>RECOMBINANT EXPRESSION</scope>
</reference>
<sequence>MMNVITVVGIILSVVCTISDAEGVDCTLPSDTGRCKAYFIRYFYNQKAGECQKFVYGGCEGNSNNFLTKSDCCKQCSPGKC</sequence>
<comment type="function">
    <text evidence="3 4">Multifunctional toxin which inhibits serine proteases and potassium channels (PubMed:22354971, PubMed:26363290). Potently inhibits plasmin (Ki=8.75 nM), trypsin, chymotrypsin and elastase (PubMed:22354971, PubMed:26363290). Also inhibits mKv1.3/KCNA3 potassium channel currents (IC(50)=371.3 nM) (PubMed:22354971).</text>
</comment>
<comment type="subcellular location">
    <subcellularLocation>
        <location evidence="9">Secreted</location>
    </subcellularLocation>
</comment>
<comment type="tissue specificity">
    <text evidence="9">Expressed by the venom gland.</text>
</comment>
<comment type="similarity">
    <text evidence="8">Belongs to the venom Kunitz-type family. Scorpion delta-Ktx subfamily. Delta-Ktx 3 sub-subfamily.</text>
</comment>
<accession>P0DJ50</accession>
<organism>
    <name type="scientific">Olivierus martensii</name>
    <name type="common">Manchurian scorpion</name>
    <name type="synonym">Mesobuthus martensii</name>
    <dbReference type="NCBI Taxonomy" id="34649"/>
    <lineage>
        <taxon>Eukaryota</taxon>
        <taxon>Metazoa</taxon>
        <taxon>Ecdysozoa</taxon>
        <taxon>Arthropoda</taxon>
        <taxon>Chelicerata</taxon>
        <taxon>Arachnida</taxon>
        <taxon>Scorpiones</taxon>
        <taxon>Buthida</taxon>
        <taxon>Buthoidea</taxon>
        <taxon>Buthidae</taxon>
        <taxon>Olivierus</taxon>
    </lineage>
</organism>
<proteinExistence type="evidence at protein level"/>
<name>VKT31_OLIMR</name>
<evidence type="ECO:0000255" key="1"/>
<evidence type="ECO:0000255" key="2">
    <source>
        <dbReference type="PROSITE-ProRule" id="PRU00031"/>
    </source>
</evidence>
<evidence type="ECO:0000269" key="3">
    <source>
    </source>
</evidence>
<evidence type="ECO:0000269" key="4">
    <source>
    </source>
</evidence>
<evidence type="ECO:0000303" key="5">
    <source>
    </source>
</evidence>
<evidence type="ECO:0000303" key="6">
    <source>
    </source>
</evidence>
<evidence type="ECO:0000303" key="7">
    <source>
    </source>
</evidence>
<evidence type="ECO:0000305" key="8"/>
<evidence type="ECO:0000305" key="9">
    <source>
    </source>
</evidence>
<feature type="signal peptide" evidence="1">
    <location>
        <begin position="1"/>
        <end position="21"/>
    </location>
</feature>
<feature type="chain" id="PRO_0000418105" description="Kunitz-type serine protease inhibitor BmKTT-2">
    <location>
        <begin position="22"/>
        <end position="81"/>
    </location>
</feature>
<feature type="domain" description="BPTI/Kunitz inhibitor" evidence="2">
    <location>
        <begin position="26"/>
        <end position="76"/>
    </location>
</feature>
<feature type="site" description="Reactive bond for serine proteases" evidence="4">
    <location>
        <begin position="36"/>
        <end position="37"/>
    </location>
</feature>
<feature type="disulfide bond" evidence="2">
    <location>
        <begin position="26"/>
        <end position="76"/>
    </location>
</feature>
<feature type="disulfide bond" evidence="2">
    <location>
        <begin position="35"/>
        <end position="59"/>
    </location>
</feature>
<feature type="disulfide bond" evidence="2">
    <location>
        <begin position="51"/>
        <end position="72"/>
    </location>
</feature>
<feature type="disulfide bond" evidence="2">
    <location>
        <begin position="73"/>
        <end position="81"/>
    </location>
</feature>
<feature type="mutagenesis site" description="Decrease in potency to inhibit plasmin." evidence="4">
    <original>K</original>
    <variation>A</variation>
    <location>
        <position position="36"/>
    </location>
</feature>
<feature type="mutagenesis site" description="Decrease in potency to inhibit plasmin." evidence="4">
    <original>A</original>
    <variation>F</variation>
    <location>
        <position position="37"/>
    </location>
</feature>
<keyword id="KW-1015">Disulfide bond</keyword>
<keyword id="KW-1199">Hemostasis impairing toxin</keyword>
<keyword id="KW-0872">Ion channel impairing toxin</keyword>
<keyword id="KW-0632">Potassium channel impairing toxin</keyword>
<keyword id="KW-0646">Protease inhibitor</keyword>
<keyword id="KW-0964">Secreted</keyword>
<keyword id="KW-0722">Serine protease inhibitor</keyword>
<keyword id="KW-0732">Signal</keyword>
<keyword id="KW-0800">Toxin</keyword>
<keyword id="KW-1220">Voltage-gated potassium channel impairing toxin</keyword>
<protein>
    <recommendedName>
        <fullName evidence="5 6 7">Kunitz-type serine protease inhibitor BmKTT-2</fullName>
    </recommendedName>
    <alternativeName>
        <fullName evidence="6">Delta-KTx 3.1</fullName>
    </alternativeName>
</protein>
<dbReference type="SMR" id="P0DJ50"/>
<dbReference type="GO" id="GO:0005576">
    <property type="term" value="C:extracellular region"/>
    <property type="evidence" value="ECO:0000303"/>
    <property type="project" value="UniProtKB"/>
</dbReference>
<dbReference type="GO" id="GO:0005615">
    <property type="term" value="C:extracellular space"/>
    <property type="evidence" value="ECO:0007669"/>
    <property type="project" value="TreeGrafter"/>
</dbReference>
<dbReference type="GO" id="GO:0033644">
    <property type="term" value="C:host cell membrane"/>
    <property type="evidence" value="ECO:0000303"/>
    <property type="project" value="UniProtKB"/>
</dbReference>
<dbReference type="GO" id="GO:0015459">
    <property type="term" value="F:potassium channel regulator activity"/>
    <property type="evidence" value="ECO:0007669"/>
    <property type="project" value="UniProtKB-KW"/>
</dbReference>
<dbReference type="GO" id="GO:0004867">
    <property type="term" value="F:serine-type endopeptidase inhibitor activity"/>
    <property type="evidence" value="ECO:0000314"/>
    <property type="project" value="UniProtKB"/>
</dbReference>
<dbReference type="GO" id="GO:0090729">
    <property type="term" value="F:toxin activity"/>
    <property type="evidence" value="ECO:0007669"/>
    <property type="project" value="UniProtKB-KW"/>
</dbReference>
<dbReference type="GO" id="GO:0044562">
    <property type="term" value="P:envenomation resulting in negative regulation of voltage-gated potassium channel activity in another organism"/>
    <property type="evidence" value="ECO:0000314"/>
    <property type="project" value="UniProtKB"/>
</dbReference>
<dbReference type="GO" id="GO:0140099">
    <property type="term" value="P:venom-mediated suppression of fibrinolysis in another organism"/>
    <property type="evidence" value="ECO:0000314"/>
    <property type="project" value="UniProtKB"/>
</dbReference>
<dbReference type="CDD" id="cd22620">
    <property type="entry name" value="Kunitz_KTT"/>
    <property type="match status" value="1"/>
</dbReference>
<dbReference type="FunFam" id="4.10.410.10:FF:000020">
    <property type="entry name" value="Collagen, type VI, alpha 3"/>
    <property type="match status" value="1"/>
</dbReference>
<dbReference type="Gene3D" id="4.10.410.10">
    <property type="entry name" value="Pancreatic trypsin inhibitor Kunitz domain"/>
    <property type="match status" value="1"/>
</dbReference>
<dbReference type="InterPro" id="IPR002223">
    <property type="entry name" value="Kunitz_BPTI"/>
</dbReference>
<dbReference type="InterPro" id="IPR036880">
    <property type="entry name" value="Kunitz_BPTI_sf"/>
</dbReference>
<dbReference type="InterPro" id="IPR020901">
    <property type="entry name" value="Prtase_inh_Kunz-CS"/>
</dbReference>
<dbReference type="InterPro" id="IPR050098">
    <property type="entry name" value="TFPI/VKTCI-like"/>
</dbReference>
<dbReference type="PANTHER" id="PTHR10083">
    <property type="entry name" value="KUNITZ-TYPE PROTEASE INHIBITOR-RELATED"/>
    <property type="match status" value="1"/>
</dbReference>
<dbReference type="PANTHER" id="PTHR10083:SF328">
    <property type="entry name" value="TISSUE FACTOR PATHWAY INHIBITOR"/>
    <property type="match status" value="1"/>
</dbReference>
<dbReference type="Pfam" id="PF00014">
    <property type="entry name" value="Kunitz_BPTI"/>
    <property type="match status" value="1"/>
</dbReference>
<dbReference type="PRINTS" id="PR00759">
    <property type="entry name" value="BASICPTASE"/>
</dbReference>
<dbReference type="SMART" id="SM00131">
    <property type="entry name" value="KU"/>
    <property type="match status" value="1"/>
</dbReference>
<dbReference type="SUPFAM" id="SSF57362">
    <property type="entry name" value="BPTI-like"/>
    <property type="match status" value="1"/>
</dbReference>
<dbReference type="PROSITE" id="PS00280">
    <property type="entry name" value="BPTI_KUNITZ_1"/>
    <property type="match status" value="1"/>
</dbReference>
<dbReference type="PROSITE" id="PS50279">
    <property type="entry name" value="BPTI_KUNITZ_2"/>
    <property type="match status" value="1"/>
</dbReference>